<accession>B2TWI3</accession>
<organism>
    <name type="scientific">Shigella boydii serotype 18 (strain CDC 3083-94 / BS512)</name>
    <dbReference type="NCBI Taxonomy" id="344609"/>
    <lineage>
        <taxon>Bacteria</taxon>
        <taxon>Pseudomonadati</taxon>
        <taxon>Pseudomonadota</taxon>
        <taxon>Gammaproteobacteria</taxon>
        <taxon>Enterobacterales</taxon>
        <taxon>Enterobacteriaceae</taxon>
        <taxon>Shigella</taxon>
    </lineage>
</organism>
<comment type="function">
    <text evidence="1">mRNA decapping enzyme that specifically removes the nicotinamide adenine dinucleotide (NAD) cap from a subset of mRNAs by hydrolyzing the diphosphate linkage to produce nicotinamide mononucleotide (NMN) and 5' monophosphate mRNA. The NAD-cap is present at the 5'-end of some mRNAs and stabilizes RNA against 5'-processing. Has preference for mRNAs with a 5'-end purine. Catalyzes the hydrolysis of a broad range of dinucleotide pyrophosphates.</text>
</comment>
<comment type="catalytic activity">
    <reaction evidence="1">
        <text>a 5'-end NAD(+)-phospho-ribonucleoside in mRNA + H2O = a 5'-end phospho-adenosine-phospho-ribonucleoside in mRNA + beta-nicotinamide D-ribonucleotide + 2 H(+)</text>
        <dbReference type="Rhea" id="RHEA:60876"/>
        <dbReference type="Rhea" id="RHEA-COMP:15698"/>
        <dbReference type="Rhea" id="RHEA-COMP:15719"/>
        <dbReference type="ChEBI" id="CHEBI:14649"/>
        <dbReference type="ChEBI" id="CHEBI:15377"/>
        <dbReference type="ChEBI" id="CHEBI:15378"/>
        <dbReference type="ChEBI" id="CHEBI:144029"/>
        <dbReference type="ChEBI" id="CHEBI:144051"/>
    </reaction>
    <physiologicalReaction direction="left-to-right" evidence="1">
        <dbReference type="Rhea" id="RHEA:60877"/>
    </physiologicalReaction>
</comment>
<comment type="catalytic activity">
    <reaction evidence="1">
        <text>NAD(+) + H2O = beta-nicotinamide D-ribonucleotide + AMP + 2 H(+)</text>
        <dbReference type="Rhea" id="RHEA:11800"/>
        <dbReference type="ChEBI" id="CHEBI:14649"/>
        <dbReference type="ChEBI" id="CHEBI:15377"/>
        <dbReference type="ChEBI" id="CHEBI:15378"/>
        <dbReference type="ChEBI" id="CHEBI:57540"/>
        <dbReference type="ChEBI" id="CHEBI:456215"/>
        <dbReference type="EC" id="3.6.1.22"/>
    </reaction>
</comment>
<comment type="catalytic activity">
    <reaction evidence="1">
        <text>NADH + H2O = reduced beta-nicotinamide D-ribonucleotide + AMP + 2 H(+)</text>
        <dbReference type="Rhea" id="RHEA:48868"/>
        <dbReference type="ChEBI" id="CHEBI:15377"/>
        <dbReference type="ChEBI" id="CHEBI:15378"/>
        <dbReference type="ChEBI" id="CHEBI:57945"/>
        <dbReference type="ChEBI" id="CHEBI:90832"/>
        <dbReference type="ChEBI" id="CHEBI:456215"/>
        <dbReference type="EC" id="3.6.1.22"/>
    </reaction>
</comment>
<comment type="cofactor">
    <cofactor evidence="1">
        <name>Mg(2+)</name>
        <dbReference type="ChEBI" id="CHEBI:18420"/>
    </cofactor>
    <cofactor evidence="1">
        <name>Mn(2+)</name>
        <dbReference type="ChEBI" id="CHEBI:29035"/>
    </cofactor>
    <text evidence="1">Divalent metal cations. Mg(2+) or Mn(2+).</text>
</comment>
<comment type="cofactor">
    <cofactor evidence="1">
        <name>Zn(2+)</name>
        <dbReference type="ChEBI" id="CHEBI:29105"/>
    </cofactor>
    <text evidence="1">Binds 1 zinc ion per subunit.</text>
</comment>
<comment type="subunit">
    <text evidence="1">Homodimer.</text>
</comment>
<comment type="similarity">
    <text evidence="1">Belongs to the Nudix hydrolase family. NudC subfamily.</text>
</comment>
<keyword id="KW-0378">Hydrolase</keyword>
<keyword id="KW-0460">Magnesium</keyword>
<keyword id="KW-0464">Manganese</keyword>
<keyword id="KW-0479">Metal-binding</keyword>
<keyword id="KW-0520">NAD</keyword>
<keyword id="KW-1185">Reference proteome</keyword>
<keyword id="KW-0862">Zinc</keyword>
<proteinExistence type="inferred from homology"/>
<sequence>MDRIIEKLDHGWWVVSHEQKLWLPKGELPYGEAANFDLVGQRALQIGEWQGEPVWLVQQQRRHDMGSVRQVIDLDVVLFQLAGRGVQLAEFYRSHKYCGYCGHEMYPSKTEWAMLCSHCRERYYPQIAPCIIVAIRRDDSILLAQHTRHRNGVHTVLAGFVEVGETLEQAVAREVMEESGIKVKNLRYVTSQPWPFPQSLMTAFMAEYDSGDIVIDPKELLEANWYRYDDLPLLPPPGTVARRLIEDTVAMCRAEYE</sequence>
<name>NUDC_SHIB3</name>
<reference key="1">
    <citation type="submission" date="2008-05" db="EMBL/GenBank/DDBJ databases">
        <title>Complete sequence of Shigella boydii serotype 18 strain BS512.</title>
        <authorList>
            <person name="Rasko D.A."/>
            <person name="Rosovitz M."/>
            <person name="Maurelli A.T."/>
            <person name="Myers G."/>
            <person name="Seshadri R."/>
            <person name="Cer R."/>
            <person name="Jiang L."/>
            <person name="Ravel J."/>
            <person name="Sebastian Y."/>
        </authorList>
    </citation>
    <scope>NUCLEOTIDE SEQUENCE [LARGE SCALE GENOMIC DNA]</scope>
    <source>
        <strain>CDC 3083-94 / BS512</strain>
    </source>
</reference>
<gene>
    <name evidence="1" type="primary">nudC</name>
    <name type="ordered locus">SbBS512_E4487</name>
</gene>
<feature type="chain" id="PRO_1000115254" description="NAD-capped RNA hydrolase NudC">
    <location>
        <begin position="1"/>
        <end position="257"/>
    </location>
</feature>
<feature type="domain" description="Nudix hydrolase" evidence="1">
    <location>
        <begin position="125"/>
        <end position="248"/>
    </location>
</feature>
<feature type="short sequence motif" description="Nudix box" evidence="1">
    <location>
        <begin position="159"/>
        <end position="180"/>
    </location>
</feature>
<feature type="binding site" evidence="1">
    <location>
        <position position="25"/>
    </location>
    <ligand>
        <name>substrate</name>
    </ligand>
</feature>
<feature type="binding site" evidence="1">
    <location>
        <position position="69"/>
    </location>
    <ligand>
        <name>substrate</name>
    </ligand>
</feature>
<feature type="binding site" evidence="1">
    <location>
        <position position="98"/>
    </location>
    <ligand>
        <name>Zn(2+)</name>
        <dbReference type="ChEBI" id="CHEBI:29105"/>
    </ligand>
</feature>
<feature type="binding site" evidence="1">
    <location>
        <position position="101"/>
    </location>
    <ligand>
        <name>Zn(2+)</name>
        <dbReference type="ChEBI" id="CHEBI:29105"/>
    </ligand>
</feature>
<feature type="binding site" evidence="1">
    <location>
        <position position="111"/>
    </location>
    <ligand>
        <name>substrate</name>
    </ligand>
</feature>
<feature type="binding site" evidence="1">
    <location>
        <position position="116"/>
    </location>
    <ligand>
        <name>Zn(2+)</name>
        <dbReference type="ChEBI" id="CHEBI:29105"/>
    </ligand>
</feature>
<feature type="binding site" evidence="1">
    <location>
        <position position="119"/>
    </location>
    <ligand>
        <name>Zn(2+)</name>
        <dbReference type="ChEBI" id="CHEBI:29105"/>
    </ligand>
</feature>
<feature type="binding site" evidence="1">
    <location>
        <position position="124"/>
    </location>
    <ligand>
        <name>substrate</name>
    </ligand>
</feature>
<feature type="binding site" evidence="1">
    <location>
        <position position="158"/>
    </location>
    <ligand>
        <name>a divalent metal cation</name>
        <dbReference type="ChEBI" id="CHEBI:60240"/>
        <label>1</label>
    </ligand>
</feature>
<feature type="binding site" evidence="1">
    <location>
        <position position="174"/>
    </location>
    <ligand>
        <name>a divalent metal cation</name>
        <dbReference type="ChEBI" id="CHEBI:60240"/>
        <label>2</label>
    </ligand>
</feature>
<feature type="binding site" evidence="1">
    <location>
        <position position="174"/>
    </location>
    <ligand>
        <name>a divalent metal cation</name>
        <dbReference type="ChEBI" id="CHEBI:60240"/>
        <label>3</label>
    </ligand>
</feature>
<feature type="binding site" evidence="1">
    <location>
        <position position="178"/>
    </location>
    <ligand>
        <name>a divalent metal cation</name>
        <dbReference type="ChEBI" id="CHEBI:60240"/>
        <label>1</label>
    </ligand>
</feature>
<feature type="binding site" evidence="1">
    <location>
        <position position="178"/>
    </location>
    <ligand>
        <name>a divalent metal cation</name>
        <dbReference type="ChEBI" id="CHEBI:60240"/>
        <label>3</label>
    </ligand>
</feature>
<feature type="binding site" evidence="1">
    <location>
        <begin position="192"/>
        <end position="199"/>
    </location>
    <ligand>
        <name>substrate</name>
    </ligand>
</feature>
<feature type="binding site" evidence="1">
    <location>
        <position position="219"/>
    </location>
    <ligand>
        <name>a divalent metal cation</name>
        <dbReference type="ChEBI" id="CHEBI:60240"/>
        <label>1</label>
    </ligand>
</feature>
<feature type="binding site" evidence="1">
    <location>
        <position position="219"/>
    </location>
    <ligand>
        <name>a divalent metal cation</name>
        <dbReference type="ChEBI" id="CHEBI:60240"/>
        <label>3</label>
    </ligand>
</feature>
<feature type="binding site" evidence="1">
    <location>
        <position position="241"/>
    </location>
    <ligand>
        <name>substrate</name>
    </ligand>
</feature>
<protein>
    <recommendedName>
        <fullName evidence="1">NAD-capped RNA hydrolase NudC</fullName>
        <shortName evidence="1">DeNADding enzyme NudC</shortName>
        <ecNumber evidence="1">3.6.1.-</ecNumber>
    </recommendedName>
    <alternativeName>
        <fullName evidence="1">NADH pyrophosphatase</fullName>
        <ecNumber evidence="1">3.6.1.22</ecNumber>
    </alternativeName>
</protein>
<evidence type="ECO:0000255" key="1">
    <source>
        <dbReference type="HAMAP-Rule" id="MF_00297"/>
    </source>
</evidence>
<dbReference type="EC" id="3.6.1.-" evidence="1"/>
<dbReference type="EC" id="3.6.1.22" evidence="1"/>
<dbReference type="EMBL" id="CP001063">
    <property type="protein sequence ID" value="ACD10369.1"/>
    <property type="molecule type" value="Genomic_DNA"/>
</dbReference>
<dbReference type="RefSeq" id="WP_000373946.1">
    <property type="nucleotide sequence ID" value="NC_010658.1"/>
</dbReference>
<dbReference type="SMR" id="B2TWI3"/>
<dbReference type="STRING" id="344609.SbBS512_E4487"/>
<dbReference type="KEGG" id="sbc:SbBS512_E4487"/>
<dbReference type="HOGENOM" id="CLU_037162_0_1_6"/>
<dbReference type="Proteomes" id="UP000001030">
    <property type="component" value="Chromosome"/>
</dbReference>
<dbReference type="GO" id="GO:0005829">
    <property type="term" value="C:cytosol"/>
    <property type="evidence" value="ECO:0007669"/>
    <property type="project" value="TreeGrafter"/>
</dbReference>
<dbReference type="GO" id="GO:0000287">
    <property type="term" value="F:magnesium ion binding"/>
    <property type="evidence" value="ECO:0007669"/>
    <property type="project" value="UniProtKB-UniRule"/>
</dbReference>
<dbReference type="GO" id="GO:0030145">
    <property type="term" value="F:manganese ion binding"/>
    <property type="evidence" value="ECO:0007669"/>
    <property type="project" value="UniProtKB-UniRule"/>
</dbReference>
<dbReference type="GO" id="GO:0000210">
    <property type="term" value="F:NAD+ diphosphatase activity"/>
    <property type="evidence" value="ECO:0007669"/>
    <property type="project" value="UniProtKB-UniRule"/>
</dbReference>
<dbReference type="GO" id="GO:0035529">
    <property type="term" value="F:NADH pyrophosphatase activity"/>
    <property type="evidence" value="ECO:0007669"/>
    <property type="project" value="TreeGrafter"/>
</dbReference>
<dbReference type="GO" id="GO:0110153">
    <property type="term" value="F:RNA NAD-cap (NMN-forming) hydrolase activity"/>
    <property type="evidence" value="ECO:0007669"/>
    <property type="project" value="RHEA"/>
</dbReference>
<dbReference type="GO" id="GO:0008270">
    <property type="term" value="F:zinc ion binding"/>
    <property type="evidence" value="ECO:0007669"/>
    <property type="project" value="UniProtKB-UniRule"/>
</dbReference>
<dbReference type="GO" id="GO:0019677">
    <property type="term" value="P:NAD catabolic process"/>
    <property type="evidence" value="ECO:0007669"/>
    <property type="project" value="TreeGrafter"/>
</dbReference>
<dbReference type="GO" id="GO:0006734">
    <property type="term" value="P:NADH metabolic process"/>
    <property type="evidence" value="ECO:0007669"/>
    <property type="project" value="TreeGrafter"/>
</dbReference>
<dbReference type="GO" id="GO:0006742">
    <property type="term" value="P:NADP catabolic process"/>
    <property type="evidence" value="ECO:0007669"/>
    <property type="project" value="TreeGrafter"/>
</dbReference>
<dbReference type="CDD" id="cd03429">
    <property type="entry name" value="NUDIX_NADH_pyrophosphatase_Nudt13"/>
    <property type="match status" value="1"/>
</dbReference>
<dbReference type="FunFam" id="3.90.79.10:FF:000004">
    <property type="entry name" value="NADH pyrophosphatase"/>
    <property type="match status" value="1"/>
</dbReference>
<dbReference type="FunFam" id="3.90.79.20:FF:000001">
    <property type="entry name" value="NADH pyrophosphatase"/>
    <property type="match status" value="1"/>
</dbReference>
<dbReference type="Gene3D" id="3.90.79.20">
    <property type="match status" value="1"/>
</dbReference>
<dbReference type="Gene3D" id="3.90.79.10">
    <property type="entry name" value="Nucleoside Triphosphate Pyrophosphohydrolase"/>
    <property type="match status" value="1"/>
</dbReference>
<dbReference type="HAMAP" id="MF_00297">
    <property type="entry name" value="Nudix_NudC"/>
    <property type="match status" value="1"/>
</dbReference>
<dbReference type="InterPro" id="IPR050241">
    <property type="entry name" value="NAD-cap_RNA_hydrolase_NudC"/>
</dbReference>
<dbReference type="InterPro" id="IPR049734">
    <property type="entry name" value="NudC-like_C"/>
</dbReference>
<dbReference type="InterPro" id="IPR015797">
    <property type="entry name" value="NUDIX_hydrolase-like_dom_sf"/>
</dbReference>
<dbReference type="InterPro" id="IPR020084">
    <property type="entry name" value="NUDIX_hydrolase_CS"/>
</dbReference>
<dbReference type="InterPro" id="IPR000086">
    <property type="entry name" value="NUDIX_hydrolase_dom"/>
</dbReference>
<dbReference type="InterPro" id="IPR022925">
    <property type="entry name" value="RNA_Hydrolase_NudC"/>
</dbReference>
<dbReference type="InterPro" id="IPR015376">
    <property type="entry name" value="Znr_NADH_PPase"/>
</dbReference>
<dbReference type="NCBIfam" id="NF001299">
    <property type="entry name" value="PRK00241.1"/>
    <property type="match status" value="1"/>
</dbReference>
<dbReference type="PANTHER" id="PTHR42904:SF6">
    <property type="entry name" value="NAD-CAPPED RNA HYDROLASE NUDT12"/>
    <property type="match status" value="1"/>
</dbReference>
<dbReference type="PANTHER" id="PTHR42904">
    <property type="entry name" value="NUDIX HYDROLASE, NUDC SUBFAMILY"/>
    <property type="match status" value="1"/>
</dbReference>
<dbReference type="Pfam" id="PF00293">
    <property type="entry name" value="NUDIX"/>
    <property type="match status" value="1"/>
</dbReference>
<dbReference type="Pfam" id="PF09297">
    <property type="entry name" value="Zn_ribbon_NUD"/>
    <property type="match status" value="1"/>
</dbReference>
<dbReference type="SUPFAM" id="SSF55811">
    <property type="entry name" value="Nudix"/>
    <property type="match status" value="2"/>
</dbReference>
<dbReference type="PROSITE" id="PS51462">
    <property type="entry name" value="NUDIX"/>
    <property type="match status" value="1"/>
</dbReference>
<dbReference type="PROSITE" id="PS00893">
    <property type="entry name" value="NUDIX_BOX"/>
    <property type="match status" value="1"/>
</dbReference>